<dbReference type="EMBL" id="DQ977238">
    <property type="protein sequence ID" value="ABM54316.1"/>
    <property type="molecule type" value="Genomic_DNA"/>
</dbReference>
<dbReference type="RefSeq" id="XP_003821071.1">
    <property type="nucleotide sequence ID" value="XM_003821023.2"/>
</dbReference>
<dbReference type="RefSeq" id="XP_008972745.1">
    <property type="nucleotide sequence ID" value="XM_008974497.2"/>
</dbReference>
<dbReference type="SMR" id="A1YG91"/>
<dbReference type="STRING" id="9597.ENSPPAP00000011220"/>
<dbReference type="GeneID" id="100993377"/>
<dbReference type="KEGG" id="pps:100993377"/>
<dbReference type="eggNOG" id="KOG3806">
    <property type="taxonomic scope" value="Eukaryota"/>
</dbReference>
<dbReference type="Proteomes" id="UP000240080">
    <property type="component" value="Unplaced"/>
</dbReference>
<dbReference type="GO" id="GO:0005634">
    <property type="term" value="C:nucleus"/>
    <property type="evidence" value="ECO:0007669"/>
    <property type="project" value="UniProtKB-SubCell"/>
</dbReference>
<dbReference type="GO" id="GO:0000981">
    <property type="term" value="F:DNA-binding transcription factor activity, RNA polymerase II-specific"/>
    <property type="evidence" value="ECO:0007669"/>
    <property type="project" value="TreeGrafter"/>
</dbReference>
<dbReference type="GO" id="GO:0043565">
    <property type="term" value="F:sequence-specific DNA binding"/>
    <property type="evidence" value="ECO:0007669"/>
    <property type="project" value="InterPro"/>
</dbReference>
<dbReference type="GO" id="GO:0030154">
    <property type="term" value="P:cell differentiation"/>
    <property type="evidence" value="ECO:0007669"/>
    <property type="project" value="TreeGrafter"/>
</dbReference>
<dbReference type="FunFam" id="1.10.10.10:FF:000059">
    <property type="entry name" value="ETS translocation variant 3"/>
    <property type="match status" value="1"/>
</dbReference>
<dbReference type="Gene3D" id="1.10.10.10">
    <property type="entry name" value="Winged helix-like DNA-binding domain superfamily/Winged helix DNA-binding domain"/>
    <property type="match status" value="1"/>
</dbReference>
<dbReference type="InterPro" id="IPR000418">
    <property type="entry name" value="Ets_dom"/>
</dbReference>
<dbReference type="InterPro" id="IPR046328">
    <property type="entry name" value="ETS_fam"/>
</dbReference>
<dbReference type="InterPro" id="IPR036388">
    <property type="entry name" value="WH-like_DNA-bd_sf"/>
</dbReference>
<dbReference type="InterPro" id="IPR036390">
    <property type="entry name" value="WH_DNA-bd_sf"/>
</dbReference>
<dbReference type="PANTHER" id="PTHR11849">
    <property type="entry name" value="ETS"/>
    <property type="match status" value="1"/>
</dbReference>
<dbReference type="PANTHER" id="PTHR11849:SF30">
    <property type="entry name" value="ETS TRANSLOCATION VARIANT 3"/>
    <property type="match status" value="1"/>
</dbReference>
<dbReference type="Pfam" id="PF00178">
    <property type="entry name" value="Ets"/>
    <property type="match status" value="1"/>
</dbReference>
<dbReference type="PRINTS" id="PR00454">
    <property type="entry name" value="ETSDOMAIN"/>
</dbReference>
<dbReference type="SMART" id="SM00413">
    <property type="entry name" value="ETS"/>
    <property type="match status" value="1"/>
</dbReference>
<dbReference type="SUPFAM" id="SSF46785">
    <property type="entry name" value="Winged helix' DNA-binding domain"/>
    <property type="match status" value="1"/>
</dbReference>
<dbReference type="PROSITE" id="PS00345">
    <property type="entry name" value="ETS_DOMAIN_1"/>
    <property type="match status" value="1"/>
</dbReference>
<dbReference type="PROSITE" id="PS00346">
    <property type="entry name" value="ETS_DOMAIN_2"/>
    <property type="match status" value="1"/>
</dbReference>
<dbReference type="PROSITE" id="PS50061">
    <property type="entry name" value="ETS_DOMAIN_3"/>
    <property type="match status" value="1"/>
</dbReference>
<accession>A1YG91</accession>
<comment type="function">
    <text evidence="1">Transcriptional repressor that contribute to growth arrest during terminal macrophage differentiation by repressing target genes involved in Ras-dependent proliferation. Represses MMP1 promoter activity (By similarity).</text>
</comment>
<comment type="subcellular location">
    <subcellularLocation>
        <location evidence="4">Nucleus</location>
    </subcellularLocation>
</comment>
<comment type="similarity">
    <text evidence="6">Belongs to the ETS family.</text>
</comment>
<evidence type="ECO:0000250" key="1"/>
<evidence type="ECO:0000250" key="2">
    <source>
        <dbReference type="UniProtKB" id="P41162"/>
    </source>
</evidence>
<evidence type="ECO:0000250" key="3">
    <source>
        <dbReference type="UniProtKB" id="Q8R4Z4"/>
    </source>
</evidence>
<evidence type="ECO:0000255" key="4">
    <source>
        <dbReference type="PROSITE-ProRule" id="PRU00237"/>
    </source>
</evidence>
<evidence type="ECO:0000256" key="5">
    <source>
        <dbReference type="SAM" id="MobiDB-lite"/>
    </source>
</evidence>
<evidence type="ECO:0000305" key="6"/>
<sequence length="512" mass="57105">MKAGCSIVEKPEGGGGYQFPDWAYKTESSPGSRQIQLWHFILELLQKEEFRHVIAWQQGEYGEFVIKDPDEVARLWGRRKCKPQMNYDKLSRALRYYYNKRILHKTKGKRFTYKFNFNKLVMPNYPFINIRSSGVVPQSAPPVPTASSRFHFPPLDTHSPTNDVQPGRFSASSLTASGQESSNGTDRKTELSELEDGSAADWRRGVDPMSSRNAIGGGGIGHQKRKPDIMLPLFARPGMYPDAHSPFAVSPLPGRGGVLNVPISPALSLTPTIFSYSPSPGLSPFTSSSCFSFNPEEMKHYLHSQACSVFNYHLSPRTFPRYPGLMVPPLQCQMHPEESTQFSIKLQPPPVGRKNRERVESSEESAPVTTPTMASIPPRIKVEPASEKDPESLRQSAREKEEHTQEEGTVPSRTIEEEKGTIFARPAAPPIWPSVPISTPSEEPLEVTEDIEDRPGKEPSAPEKKEDALMPPKLRLKRRWNDDPEARELSKSGKFLWNGSGPQGLATAAADA</sequence>
<protein>
    <recommendedName>
        <fullName>ETS translocation variant 3</fullName>
    </recommendedName>
</protein>
<name>ETV3_PANPA</name>
<reference key="1">
    <citation type="submission" date="2006-08" db="EMBL/GenBank/DDBJ databases">
        <title>Positive selection in transcription factor genes on the human lineage.</title>
        <authorList>
            <person name="Nickel G.C."/>
            <person name="Tefft D.L."/>
            <person name="Trevarthen K."/>
            <person name="Funt J."/>
            <person name="Adams M.D."/>
        </authorList>
    </citation>
    <scope>NUCLEOTIDE SEQUENCE [GENOMIC DNA]</scope>
</reference>
<organism>
    <name type="scientific">Pan paniscus</name>
    <name type="common">Pygmy chimpanzee</name>
    <name type="synonym">Bonobo</name>
    <dbReference type="NCBI Taxonomy" id="9597"/>
    <lineage>
        <taxon>Eukaryota</taxon>
        <taxon>Metazoa</taxon>
        <taxon>Chordata</taxon>
        <taxon>Craniata</taxon>
        <taxon>Vertebrata</taxon>
        <taxon>Euteleostomi</taxon>
        <taxon>Mammalia</taxon>
        <taxon>Eutheria</taxon>
        <taxon>Euarchontoglires</taxon>
        <taxon>Primates</taxon>
        <taxon>Haplorrhini</taxon>
        <taxon>Catarrhini</taxon>
        <taxon>Hominidae</taxon>
        <taxon>Pan</taxon>
    </lineage>
</organism>
<gene>
    <name type="primary">ETV3</name>
</gene>
<proteinExistence type="inferred from homology"/>
<keyword id="KW-0007">Acetylation</keyword>
<keyword id="KW-0238">DNA-binding</keyword>
<keyword id="KW-1017">Isopeptide bond</keyword>
<keyword id="KW-0539">Nucleus</keyword>
<keyword id="KW-0597">Phosphoprotein</keyword>
<keyword id="KW-1185">Reference proteome</keyword>
<keyword id="KW-0678">Repressor</keyword>
<keyword id="KW-0804">Transcription</keyword>
<keyword id="KW-0805">Transcription regulation</keyword>
<keyword id="KW-0832">Ubl conjugation</keyword>
<feature type="chain" id="PRO_0000285522" description="ETS translocation variant 3">
    <location>
        <begin position="1"/>
        <end position="512"/>
    </location>
</feature>
<feature type="DNA-binding region" description="ETS" evidence="4">
    <location>
        <begin position="35"/>
        <end position="116"/>
    </location>
</feature>
<feature type="region of interest" description="Disordered" evidence="5">
    <location>
        <begin position="136"/>
        <end position="222"/>
    </location>
</feature>
<feature type="region of interest" description="Disordered" evidence="5">
    <location>
        <begin position="336"/>
        <end position="512"/>
    </location>
</feature>
<feature type="compositionally biased region" description="Polar residues" evidence="5">
    <location>
        <begin position="158"/>
        <end position="184"/>
    </location>
</feature>
<feature type="compositionally biased region" description="Basic and acidic residues" evidence="5">
    <location>
        <begin position="380"/>
        <end position="406"/>
    </location>
</feature>
<feature type="compositionally biased region" description="Acidic residues" evidence="5">
    <location>
        <begin position="443"/>
        <end position="452"/>
    </location>
</feature>
<feature type="compositionally biased region" description="Basic and acidic residues" evidence="5">
    <location>
        <begin position="453"/>
        <end position="468"/>
    </location>
</feature>
<feature type="compositionally biased region" description="Basic and acidic residues" evidence="5">
    <location>
        <begin position="479"/>
        <end position="491"/>
    </location>
</feature>
<feature type="modified residue" description="Phosphoserine" evidence="2">
    <location>
        <position position="139"/>
    </location>
</feature>
<feature type="modified residue" description="Phosphoserine" evidence="2">
    <location>
        <position position="159"/>
    </location>
</feature>
<feature type="modified residue" description="Phosphoserine" evidence="3">
    <location>
        <position position="315"/>
    </location>
</feature>
<feature type="modified residue" description="N6-acetyllysine; alternate" evidence="2">
    <location>
        <position position="388"/>
    </location>
</feature>
<feature type="cross-link" description="Glycyl lysine isopeptide (Lys-Gly) (interchain with G-Cter in SUMO2)" evidence="2">
    <location>
        <position position="381"/>
    </location>
</feature>
<feature type="cross-link" description="Glycyl lysine isopeptide (Lys-Gly) (interchain with G-Cter in SUMO2); alternate" evidence="2">
    <location>
        <position position="388"/>
    </location>
</feature>